<proteinExistence type="inferred from homology"/>
<feature type="chain" id="PRO_1000022403" description="Pyridoxine 5'-phosphate synthase">
    <location>
        <begin position="1"/>
        <end position="243"/>
    </location>
</feature>
<feature type="active site" description="Proton acceptor" evidence="1">
    <location>
        <position position="43"/>
    </location>
</feature>
<feature type="active site" description="Proton acceptor" evidence="1">
    <location>
        <position position="70"/>
    </location>
</feature>
<feature type="active site" description="Proton donor" evidence="1">
    <location>
        <position position="192"/>
    </location>
</feature>
<feature type="binding site" evidence="1">
    <location>
        <position position="7"/>
    </location>
    <ligand>
        <name>3-amino-2-oxopropyl phosphate</name>
        <dbReference type="ChEBI" id="CHEBI:57279"/>
    </ligand>
</feature>
<feature type="binding site" evidence="1">
    <location>
        <begin position="9"/>
        <end position="10"/>
    </location>
    <ligand>
        <name>1-deoxy-D-xylulose 5-phosphate</name>
        <dbReference type="ChEBI" id="CHEBI:57792"/>
    </ligand>
</feature>
<feature type="binding site" evidence="1">
    <location>
        <position position="18"/>
    </location>
    <ligand>
        <name>3-amino-2-oxopropyl phosphate</name>
        <dbReference type="ChEBI" id="CHEBI:57279"/>
    </ligand>
</feature>
<feature type="binding site" evidence="1">
    <location>
        <position position="45"/>
    </location>
    <ligand>
        <name>1-deoxy-D-xylulose 5-phosphate</name>
        <dbReference type="ChEBI" id="CHEBI:57792"/>
    </ligand>
</feature>
<feature type="binding site" evidence="1">
    <location>
        <position position="50"/>
    </location>
    <ligand>
        <name>1-deoxy-D-xylulose 5-phosphate</name>
        <dbReference type="ChEBI" id="CHEBI:57792"/>
    </ligand>
</feature>
<feature type="binding site" evidence="1">
    <location>
        <position position="100"/>
    </location>
    <ligand>
        <name>1-deoxy-D-xylulose 5-phosphate</name>
        <dbReference type="ChEBI" id="CHEBI:57792"/>
    </ligand>
</feature>
<feature type="binding site" evidence="1">
    <location>
        <position position="193"/>
    </location>
    <ligand>
        <name>3-amino-2-oxopropyl phosphate</name>
        <dbReference type="ChEBI" id="CHEBI:57279"/>
    </ligand>
</feature>
<feature type="binding site" evidence="1">
    <location>
        <begin position="215"/>
        <end position="216"/>
    </location>
    <ligand>
        <name>3-amino-2-oxopropyl phosphate</name>
        <dbReference type="ChEBI" id="CHEBI:57279"/>
    </ligand>
</feature>
<feature type="site" description="Transition state stabilizer" evidence="1">
    <location>
        <position position="152"/>
    </location>
</feature>
<comment type="function">
    <text evidence="1">Catalyzes the complicated ring closure reaction between the two acyclic compounds 1-deoxy-D-xylulose-5-phosphate (DXP) and 3-amino-2-oxopropyl phosphate (1-amino-acetone-3-phosphate or AAP) to form pyridoxine 5'-phosphate (PNP) and inorganic phosphate.</text>
</comment>
<comment type="catalytic activity">
    <reaction evidence="1">
        <text>3-amino-2-oxopropyl phosphate + 1-deoxy-D-xylulose 5-phosphate = pyridoxine 5'-phosphate + phosphate + 2 H2O + H(+)</text>
        <dbReference type="Rhea" id="RHEA:15265"/>
        <dbReference type="ChEBI" id="CHEBI:15377"/>
        <dbReference type="ChEBI" id="CHEBI:15378"/>
        <dbReference type="ChEBI" id="CHEBI:43474"/>
        <dbReference type="ChEBI" id="CHEBI:57279"/>
        <dbReference type="ChEBI" id="CHEBI:57792"/>
        <dbReference type="ChEBI" id="CHEBI:58589"/>
        <dbReference type="EC" id="2.6.99.2"/>
    </reaction>
</comment>
<comment type="pathway">
    <text evidence="1">Cofactor biosynthesis; pyridoxine 5'-phosphate biosynthesis; pyridoxine 5'-phosphate from D-erythrose 4-phosphate: step 5/5.</text>
</comment>
<comment type="subunit">
    <text evidence="1">Homooctamer; tetramer of dimers.</text>
</comment>
<comment type="subcellular location">
    <subcellularLocation>
        <location evidence="1">Cytoplasm</location>
    </subcellularLocation>
</comment>
<comment type="similarity">
    <text evidence="1">Belongs to the PNP synthase family.</text>
</comment>
<accession>Q2S0U5</accession>
<name>PDXJ_SALRD</name>
<gene>
    <name evidence="1" type="primary">pdxJ</name>
    <name type="ordered locus">SRU_2080</name>
</gene>
<sequence length="243" mass="26300">MTNLLINVDHVGTLRNAREETFPDPVHAAARCEQAGADGIVFHLREDRRHITERDVRLLAETVNGKLDFELSTEEEVVSICCDVVPDLATLVPERREEVTTEGGLDVTASRPRLNAVTDRLYDAGVDQVSLFVDPVPAQIEATAAVGANCVELHTGDFAEASTEAARREEAERLAAAADAAHEAGLRVHAGHGLDYNNFSLFRETVPHVAEVSIGFAVMARAILVGMDQAVRDMRATVANAQP</sequence>
<organism>
    <name type="scientific">Salinibacter ruber (strain DSM 13855 / M31)</name>
    <dbReference type="NCBI Taxonomy" id="309807"/>
    <lineage>
        <taxon>Bacteria</taxon>
        <taxon>Pseudomonadati</taxon>
        <taxon>Rhodothermota</taxon>
        <taxon>Rhodothermia</taxon>
        <taxon>Rhodothermales</taxon>
        <taxon>Salinibacteraceae</taxon>
        <taxon>Salinibacter</taxon>
    </lineage>
</organism>
<dbReference type="EC" id="2.6.99.2" evidence="1"/>
<dbReference type="EMBL" id="CP000159">
    <property type="protein sequence ID" value="ABC43980.1"/>
    <property type="molecule type" value="Genomic_DNA"/>
</dbReference>
<dbReference type="RefSeq" id="WP_011404808.1">
    <property type="nucleotide sequence ID" value="NC_007677.1"/>
</dbReference>
<dbReference type="RefSeq" id="YP_446186.1">
    <property type="nucleotide sequence ID" value="NC_007677.1"/>
</dbReference>
<dbReference type="SMR" id="Q2S0U5"/>
<dbReference type="STRING" id="309807.SRU_2080"/>
<dbReference type="EnsemblBacteria" id="ABC43980">
    <property type="protein sequence ID" value="ABC43980"/>
    <property type="gene ID" value="SRU_2080"/>
</dbReference>
<dbReference type="KEGG" id="sru:SRU_2080"/>
<dbReference type="PATRIC" id="fig|309807.25.peg.2165"/>
<dbReference type="eggNOG" id="COG0854">
    <property type="taxonomic scope" value="Bacteria"/>
</dbReference>
<dbReference type="HOGENOM" id="CLU_074563_0_0_10"/>
<dbReference type="OrthoDB" id="9806590at2"/>
<dbReference type="UniPathway" id="UPA00244">
    <property type="reaction ID" value="UER00313"/>
</dbReference>
<dbReference type="Proteomes" id="UP000008674">
    <property type="component" value="Chromosome"/>
</dbReference>
<dbReference type="GO" id="GO:0005829">
    <property type="term" value="C:cytosol"/>
    <property type="evidence" value="ECO:0007669"/>
    <property type="project" value="TreeGrafter"/>
</dbReference>
<dbReference type="GO" id="GO:0033856">
    <property type="term" value="F:pyridoxine 5'-phosphate synthase activity"/>
    <property type="evidence" value="ECO:0007669"/>
    <property type="project" value="UniProtKB-EC"/>
</dbReference>
<dbReference type="GO" id="GO:0008615">
    <property type="term" value="P:pyridoxine biosynthetic process"/>
    <property type="evidence" value="ECO:0007669"/>
    <property type="project" value="UniProtKB-UniRule"/>
</dbReference>
<dbReference type="CDD" id="cd00003">
    <property type="entry name" value="PNPsynthase"/>
    <property type="match status" value="1"/>
</dbReference>
<dbReference type="Gene3D" id="3.20.20.70">
    <property type="entry name" value="Aldolase class I"/>
    <property type="match status" value="1"/>
</dbReference>
<dbReference type="HAMAP" id="MF_00279">
    <property type="entry name" value="PdxJ"/>
    <property type="match status" value="1"/>
</dbReference>
<dbReference type="InterPro" id="IPR013785">
    <property type="entry name" value="Aldolase_TIM"/>
</dbReference>
<dbReference type="InterPro" id="IPR004569">
    <property type="entry name" value="PyrdxlP_synth_PdxJ"/>
</dbReference>
<dbReference type="InterPro" id="IPR036130">
    <property type="entry name" value="Pyridoxine-5'_phos_synth"/>
</dbReference>
<dbReference type="NCBIfam" id="TIGR00559">
    <property type="entry name" value="pdxJ"/>
    <property type="match status" value="1"/>
</dbReference>
<dbReference type="NCBIfam" id="NF003625">
    <property type="entry name" value="PRK05265.1-3"/>
    <property type="match status" value="1"/>
</dbReference>
<dbReference type="NCBIfam" id="NF003627">
    <property type="entry name" value="PRK05265.1-5"/>
    <property type="match status" value="1"/>
</dbReference>
<dbReference type="PANTHER" id="PTHR30456">
    <property type="entry name" value="PYRIDOXINE 5'-PHOSPHATE SYNTHASE"/>
    <property type="match status" value="1"/>
</dbReference>
<dbReference type="PANTHER" id="PTHR30456:SF0">
    <property type="entry name" value="PYRIDOXINE 5'-PHOSPHATE SYNTHASE"/>
    <property type="match status" value="1"/>
</dbReference>
<dbReference type="Pfam" id="PF03740">
    <property type="entry name" value="PdxJ"/>
    <property type="match status" value="1"/>
</dbReference>
<dbReference type="SUPFAM" id="SSF63892">
    <property type="entry name" value="Pyridoxine 5'-phosphate synthase"/>
    <property type="match status" value="1"/>
</dbReference>
<keyword id="KW-0963">Cytoplasm</keyword>
<keyword id="KW-0664">Pyridoxine biosynthesis</keyword>
<keyword id="KW-1185">Reference proteome</keyword>
<keyword id="KW-0808">Transferase</keyword>
<evidence type="ECO:0000255" key="1">
    <source>
        <dbReference type="HAMAP-Rule" id="MF_00279"/>
    </source>
</evidence>
<protein>
    <recommendedName>
        <fullName evidence="1">Pyridoxine 5'-phosphate synthase</fullName>
        <shortName evidence="1">PNP synthase</shortName>
        <ecNumber evidence="1">2.6.99.2</ecNumber>
    </recommendedName>
</protein>
<reference key="1">
    <citation type="journal article" date="2005" name="Proc. Natl. Acad. Sci. U.S.A.">
        <title>The genome of Salinibacter ruber: convergence and gene exchange among hyperhalophilic bacteria and archaea.</title>
        <authorList>
            <person name="Mongodin E.F."/>
            <person name="Nelson K.E."/>
            <person name="Daugherty S."/>
            <person name="DeBoy R.T."/>
            <person name="Wister J."/>
            <person name="Khouri H."/>
            <person name="Weidman J."/>
            <person name="Walsh D.A."/>
            <person name="Papke R.T."/>
            <person name="Sanchez Perez G."/>
            <person name="Sharma A.K."/>
            <person name="Nesbo C.L."/>
            <person name="MacLeod D."/>
            <person name="Bapteste E."/>
            <person name="Doolittle W.F."/>
            <person name="Charlebois R.L."/>
            <person name="Legault B."/>
            <person name="Rodriguez-Valera F."/>
        </authorList>
    </citation>
    <scope>NUCLEOTIDE SEQUENCE [LARGE SCALE GENOMIC DNA]</scope>
    <source>
        <strain>DSM 13855 / CECT 5946 / M31</strain>
    </source>
</reference>